<comment type="function">
    <text evidence="1 4 5 7 10">RNA-binding protein involved in alternative pre-RNA splicing and in cytoplasmic stress granules formation (PubMed:10613902, PubMed:1326761, PubMed:17488725, PubMed:8576255). Shows a preference for uridine-rich RNAs (PubMed:8576255). Activates splicing of alternative exons with weak 5' splice sites followed by a U-rich stretch on its own pre-mRNA and on TIA1 mRNA (By similarity). Promotes the inclusion of TIA1 exon 5 to give rise to the long isoform (isoform a) of TIA1 (PubMed:17488725). Acts downstream of the stress-induced phosphorylation of EIF2S1/EIF2A to promote the recruitment of untranslated mRNAs to cytoplasmic stress granules (SG) (PubMed:10613902). Possesses nucleolytic activity against cytotoxic lymphocyte target cells (PubMed:1326761). May be involved in apoptosis (PubMed:1326761).</text>
</comment>
<comment type="subunit">
    <text evidence="6">Interacts with FASTK.</text>
</comment>
<comment type="interaction">
    <interactant intactId="EBI-2820828">
        <id>Q01085</id>
    </interactant>
    <interactant intactId="EBI-948630">
        <id>Q86Y13</id>
        <label>DZIP3</label>
    </interactant>
    <organismsDiffer>false</organismsDiffer>
    <experiments>2</experiments>
</comment>
<comment type="interaction">
    <interactant intactId="EBI-2820828">
        <id>Q01085</id>
    </interactant>
    <interactant intactId="EBI-1055820">
        <id>Q9HCE1</id>
        <label>MOV10</label>
    </interactant>
    <organismsDiffer>false</organismsDiffer>
    <experiments>2</experiments>
</comment>
<comment type="interaction">
    <interactant intactId="EBI-11064654">
        <id>Q01085-2</id>
    </interactant>
    <interactant intactId="EBI-357530">
        <id>Q9ULX6</id>
        <label>AKAP8L</label>
    </interactant>
    <organismsDiffer>false</organismsDiffer>
    <experiments>3</experiments>
</comment>
<comment type="interaction">
    <interactant intactId="EBI-11064654">
        <id>Q01085-2</id>
    </interactant>
    <interactant intactId="EBI-12826295">
        <id>P19801</id>
        <label>AOC1</label>
    </interactant>
    <organismsDiffer>false</organismsDiffer>
    <experiments>3</experiments>
</comment>
<comment type="interaction">
    <interactant intactId="EBI-11064654">
        <id>Q01085-2</id>
    </interactant>
    <interactant intactId="EBI-953896">
        <id>Q9NP55</id>
        <label>BPIFA1</label>
    </interactant>
    <organismsDiffer>false</organismsDiffer>
    <experiments>3</experiments>
</comment>
<comment type="interaction">
    <interactant intactId="EBI-11064654">
        <id>Q01085-2</id>
    </interactant>
    <interactant intactId="EBI-12809220">
        <id>Q5SWW7</id>
        <label>C10orf55</label>
    </interactant>
    <organismsDiffer>false</organismsDiffer>
    <experiments>3</experiments>
</comment>
<comment type="interaction">
    <interactant intactId="EBI-11064654">
        <id>Q01085-2</id>
    </interactant>
    <interactant intactId="EBI-1383687">
        <id>Q9UQM7</id>
        <label>CAMK2A</label>
    </interactant>
    <organismsDiffer>false</organismsDiffer>
    <experiments>3</experiments>
</comment>
<comment type="interaction">
    <interactant intactId="EBI-11064654">
        <id>Q01085-2</id>
    </interactant>
    <interactant intactId="EBI-12818201">
        <id>Q9BZC1-2</id>
        <label>CELF4</label>
    </interactant>
    <organismsDiffer>false</organismsDiffer>
    <experiments>3</experiments>
</comment>
<comment type="interaction">
    <interactant intactId="EBI-11064654">
        <id>Q01085-2</id>
    </interactant>
    <interactant intactId="EBI-724310">
        <id>Q15038</id>
        <label>DAZAP2</label>
    </interactant>
    <organismsDiffer>false</organismsDiffer>
    <experiments>5</experiments>
</comment>
<comment type="interaction">
    <interactant intactId="EBI-11064654">
        <id>Q01085-2</id>
    </interactant>
    <interactant intactId="EBI-11978259">
        <id>Q92567-2</id>
        <label>FAM168A</label>
    </interactant>
    <organismsDiffer>false</organismsDiffer>
    <experiments>5</experiments>
</comment>
<comment type="interaction">
    <interactant intactId="EBI-11064654">
        <id>Q01085-2</id>
    </interactant>
    <interactant intactId="EBI-12193763">
        <id>A1KXE4-2</id>
        <label>FAM168B</label>
    </interactant>
    <organismsDiffer>false</organismsDiffer>
    <experiments>3</experiments>
</comment>
<comment type="interaction">
    <interactant intactId="EBI-11064654">
        <id>Q01085-2</id>
    </interactant>
    <interactant intactId="EBI-12121668">
        <id>Q96AE4-2</id>
        <label>FUBP1</label>
    </interactant>
    <organismsDiffer>false</organismsDiffer>
    <experiments>3</experiments>
</comment>
<comment type="interaction">
    <interactant intactId="EBI-11064654">
        <id>Q01085-2</id>
    </interactant>
    <interactant intactId="EBI-2832909">
        <id>Q7Z429</id>
        <label>GRINA</label>
    </interactant>
    <organismsDiffer>false</organismsDiffer>
    <experiments>3</experiments>
</comment>
<comment type="interaction">
    <interactant intactId="EBI-11064654">
        <id>Q01085-2</id>
    </interactant>
    <interactant intactId="EBI-6509505">
        <id>Q0VD86</id>
        <label>INCA1</label>
    </interactant>
    <organismsDiffer>false</organismsDiffer>
    <experiments>3</experiments>
</comment>
<comment type="interaction">
    <interactant intactId="EBI-11064654">
        <id>Q01085-2</id>
    </interactant>
    <interactant intactId="EBI-8284732">
        <id>Q13351</id>
        <label>KLF1</label>
    </interactant>
    <organismsDiffer>false</organismsDiffer>
    <experiments>3</experiments>
</comment>
<comment type="interaction">
    <interactant intactId="EBI-11064654">
        <id>Q01085-2</id>
    </interactant>
    <interactant intactId="EBI-10261141">
        <id>Q8IUC2</id>
        <label>KRTAP8-1</label>
    </interactant>
    <organismsDiffer>false</organismsDiffer>
    <experiments>3</experiments>
</comment>
<comment type="interaction">
    <interactant intactId="EBI-11064654">
        <id>Q01085-2</id>
    </interactant>
    <interactant intactId="EBI-716006">
        <id>Q9Y5V3</id>
        <label>MAGED1</label>
    </interactant>
    <organismsDiffer>false</organismsDiffer>
    <experiments>3</experiments>
</comment>
<comment type="interaction">
    <interactant intactId="EBI-11064654">
        <id>Q01085-2</id>
    </interactant>
    <interactant intactId="EBI-741424">
        <id>Q8NDC0</id>
        <label>MAPK1IP1L</label>
    </interactant>
    <organismsDiffer>false</organismsDiffer>
    <experiments>3</experiments>
</comment>
<comment type="interaction">
    <interactant intactId="EBI-11064654">
        <id>Q01085-2</id>
    </interactant>
    <interactant intactId="EBI-13307411">
        <id>Q5VZF2-2</id>
        <label>MBNL2</label>
    </interactant>
    <organismsDiffer>false</organismsDiffer>
    <experiments>3</experiments>
</comment>
<comment type="interaction">
    <interactant intactId="EBI-11064654">
        <id>Q01085-2</id>
    </interactant>
    <interactant intactId="EBI-740924">
        <id>Q9NZ81</id>
        <label>PRR13</label>
    </interactant>
    <organismsDiffer>false</organismsDiffer>
    <experiments>3</experiments>
</comment>
<comment type="interaction">
    <interactant intactId="EBI-11064654">
        <id>Q01085-2</id>
    </interactant>
    <interactant intactId="EBI-12754095">
        <id>P86480</id>
        <label>PRR20D</label>
    </interactant>
    <organismsDiffer>false</organismsDiffer>
    <experiments>3</experiments>
</comment>
<comment type="interaction">
    <interactant intactId="EBI-11064654">
        <id>Q01085-2</id>
    </interactant>
    <interactant intactId="EBI-945792">
        <id>Q96PU8</id>
        <label>QKI</label>
    </interactant>
    <organismsDiffer>false</organismsDiffer>
    <experiments>3</experiments>
</comment>
<comment type="interaction">
    <interactant intactId="EBI-11064654">
        <id>Q01085-2</id>
    </interactant>
    <interactant intactId="EBI-11987469">
        <id>Q6ZRY4</id>
        <label>RBPMS2</label>
    </interactant>
    <organismsDiffer>false</organismsDiffer>
    <experiments>3</experiments>
</comment>
<comment type="interaction">
    <interactant intactId="EBI-11064654">
        <id>Q01085-2</id>
    </interactant>
    <interactant intactId="EBI-12275818">
        <id>Q53HV7-2</id>
        <label>SMUG1</label>
    </interactant>
    <organismsDiffer>false</organismsDiffer>
    <experiments>3</experiments>
</comment>
<comment type="interaction">
    <interactant intactId="EBI-11064654">
        <id>Q01085-2</id>
    </interactant>
    <interactant intactId="EBI-607085">
        <id>P09012</id>
        <label>SNRPA</label>
    </interactant>
    <organismsDiffer>false</organismsDiffer>
    <experiments>3</experiments>
</comment>
<comment type="interaction">
    <interactant intactId="EBI-11064654">
        <id>Q01085-2</id>
    </interactant>
    <interactant intactId="EBI-2559305">
        <id>A5D8V6</id>
        <label>VPS37C</label>
    </interactant>
    <organismsDiffer>false</organismsDiffer>
    <experiments>3</experiments>
</comment>
<comment type="subcellular location">
    <subcellularLocation>
        <location evidence="4">Nucleus</location>
    </subcellularLocation>
    <subcellularLocation>
        <location evidence="1">Cytoplasm</location>
    </subcellularLocation>
    <subcellularLocation>
        <location evidence="5">Cytolytic granule</location>
    </subcellularLocation>
    <subcellularLocation>
        <location evidence="4 8">Cytoplasm</location>
        <location evidence="4 8">Stress granule</location>
    </subcellularLocation>
    <text evidence="1 4">Nuclear import seems to be coupled to RNA polymerase II transcription and may be dependent on RNA-binding (By similarity). Accumulates in cytoplasmic stress granules (SG) following cellular damage (PubMed:10613902).</text>
</comment>
<comment type="alternative products">
    <event type="alternative splicing"/>
    <isoform>
        <id>Q01085-1</id>
        <name>1</name>
        <sequence type="displayed"/>
    </isoform>
    <isoform>
        <id>Q01085-2</id>
        <name>2</name>
        <sequence type="described" ref="VSP_043700"/>
    </isoform>
</comment>
<comment type="tissue specificity">
    <text evidence="7">Expressed in brain, heart, kidney, lung and skeletal muscle.</text>
</comment>
<comment type="domain">
    <text evidence="10">The RRM 2 domain is required for the binding to target RNA, and the RRM 1 and RRM 3 domains seem to contribute to the affinity of the interaction with RNA.</text>
</comment>
<comment type="domain">
    <text evidence="1">The RRM2 domain and the C-terminal residues 290-339 contribute to nuclear localization.</text>
</comment>
<comment type="domain">
    <text evidence="1">The RRM3 domain mediates nuclear export and cytoplasmic localization in a manner dependent on RNA- binding.</text>
</comment>
<comment type="PTM">
    <text evidence="9">Phosphorylated by MAPK14 following DNA damage, releasing TIAR from GADD45A mRNA.</text>
</comment>
<accession>Q01085</accession>
<accession>A8K3T0</accession>
<accession>A8K4L9</accession>
<organism>
    <name type="scientific">Homo sapiens</name>
    <name type="common">Human</name>
    <dbReference type="NCBI Taxonomy" id="9606"/>
    <lineage>
        <taxon>Eukaryota</taxon>
        <taxon>Metazoa</taxon>
        <taxon>Chordata</taxon>
        <taxon>Craniata</taxon>
        <taxon>Vertebrata</taxon>
        <taxon>Euteleostomi</taxon>
        <taxon>Mammalia</taxon>
        <taxon>Eutheria</taxon>
        <taxon>Euarchontoglires</taxon>
        <taxon>Primates</taxon>
        <taxon>Haplorrhini</taxon>
        <taxon>Catarrhini</taxon>
        <taxon>Hominidae</taxon>
        <taxon>Homo</taxon>
    </lineage>
</organism>
<dbReference type="EMBL" id="M96954">
    <property type="protein sequence ID" value="AAA36384.1"/>
    <property type="molecule type" value="mRNA"/>
</dbReference>
<dbReference type="EMBL" id="AK290695">
    <property type="protein sequence ID" value="BAF83384.1"/>
    <property type="molecule type" value="mRNA"/>
</dbReference>
<dbReference type="EMBL" id="AK290984">
    <property type="protein sequence ID" value="BAF83673.1"/>
    <property type="molecule type" value="mRNA"/>
</dbReference>
<dbReference type="CCDS" id="CCDS31295.1">
    <molecule id="Q01085-2"/>
</dbReference>
<dbReference type="CCDS" id="CCDS7613.1">
    <molecule id="Q01085-1"/>
</dbReference>
<dbReference type="PIR" id="A46174">
    <property type="entry name" value="A46174"/>
</dbReference>
<dbReference type="RefSeq" id="NP_001029097.1">
    <molecule id="Q01085-2"/>
    <property type="nucleotide sequence ID" value="NM_001033925.2"/>
</dbReference>
<dbReference type="RefSeq" id="NP_003243.1">
    <molecule id="Q01085-1"/>
    <property type="nucleotide sequence ID" value="NM_003252.4"/>
</dbReference>
<dbReference type="PDB" id="1X4G">
    <property type="method" value="NMR"/>
    <property type="chains" value="A=187-282"/>
</dbReference>
<dbReference type="PDB" id="2CQI">
    <property type="method" value="NMR"/>
    <property type="chains" value="A=1-90"/>
</dbReference>
<dbReference type="PDB" id="2DH7">
    <property type="method" value="NMR"/>
    <property type="chains" value="A=89-180"/>
</dbReference>
<dbReference type="PDBsum" id="1X4G"/>
<dbReference type="PDBsum" id="2CQI"/>
<dbReference type="PDBsum" id="2DH7"/>
<dbReference type="SMR" id="Q01085"/>
<dbReference type="BioGRID" id="112929">
    <property type="interactions" value="169"/>
</dbReference>
<dbReference type="DIP" id="DIP-42425N"/>
<dbReference type="FunCoup" id="Q01085">
    <property type="interactions" value="4595"/>
</dbReference>
<dbReference type="IntAct" id="Q01085">
    <property type="interactions" value="73"/>
</dbReference>
<dbReference type="MINT" id="Q01085"/>
<dbReference type="STRING" id="9606.ENSP00000358089"/>
<dbReference type="GlyGen" id="Q01085">
    <property type="glycosylation" value="2 sites, 1 O-linked glycan (2 sites)"/>
</dbReference>
<dbReference type="iPTMnet" id="Q01085"/>
<dbReference type="PhosphoSitePlus" id="Q01085"/>
<dbReference type="SwissPalm" id="Q01085"/>
<dbReference type="BioMuta" id="TIAL1"/>
<dbReference type="DMDM" id="267131"/>
<dbReference type="jPOST" id="Q01085"/>
<dbReference type="MassIVE" id="Q01085"/>
<dbReference type="PaxDb" id="9606-ENSP00000358089"/>
<dbReference type="PeptideAtlas" id="Q01085"/>
<dbReference type="ProteomicsDB" id="57913">
    <molecule id="Q01085-1"/>
</dbReference>
<dbReference type="ProteomicsDB" id="57914">
    <molecule id="Q01085-2"/>
</dbReference>
<dbReference type="Pumba" id="Q01085"/>
<dbReference type="Antibodypedia" id="18838">
    <property type="antibodies" value="159 antibodies from 29 providers"/>
</dbReference>
<dbReference type="DNASU" id="7073"/>
<dbReference type="Ensembl" id="ENST00000369093.6">
    <molecule id="Q01085-2"/>
    <property type="protein sequence ID" value="ENSP00000358089.2"/>
    <property type="gene ID" value="ENSG00000151923.18"/>
</dbReference>
<dbReference type="Ensembl" id="ENST00000436547.7">
    <molecule id="Q01085-1"/>
    <property type="protein sequence ID" value="ENSP00000394902.2"/>
    <property type="gene ID" value="ENSG00000151923.18"/>
</dbReference>
<dbReference type="GeneID" id="7073"/>
<dbReference type="KEGG" id="hsa:7073"/>
<dbReference type="MANE-Select" id="ENST00000436547.7">
    <property type="protein sequence ID" value="ENSP00000394902.2"/>
    <property type="RefSeq nucleotide sequence ID" value="NM_003252.4"/>
    <property type="RefSeq protein sequence ID" value="NP_003243.1"/>
</dbReference>
<dbReference type="UCSC" id="uc001lei.2">
    <molecule id="Q01085-1"/>
    <property type="organism name" value="human"/>
</dbReference>
<dbReference type="AGR" id="HGNC:11804"/>
<dbReference type="CTD" id="7073"/>
<dbReference type="DisGeNET" id="7073"/>
<dbReference type="GeneCards" id="TIAL1"/>
<dbReference type="HGNC" id="HGNC:11804">
    <property type="gene designation" value="TIAL1"/>
</dbReference>
<dbReference type="HPA" id="ENSG00000151923">
    <property type="expression patterns" value="Low tissue specificity"/>
</dbReference>
<dbReference type="MIM" id="603413">
    <property type="type" value="gene"/>
</dbReference>
<dbReference type="neXtProt" id="NX_Q01085"/>
<dbReference type="OpenTargets" id="ENSG00000151923"/>
<dbReference type="PharmGKB" id="PA36513"/>
<dbReference type="VEuPathDB" id="HostDB:ENSG00000151923"/>
<dbReference type="eggNOG" id="KOG0148">
    <property type="taxonomic scope" value="Eukaryota"/>
</dbReference>
<dbReference type="GeneTree" id="ENSGT00940000160482"/>
<dbReference type="HOGENOM" id="CLU_025000_2_0_1"/>
<dbReference type="InParanoid" id="Q01085"/>
<dbReference type="OMA" id="NEIRVNW"/>
<dbReference type="OrthoDB" id="439808at2759"/>
<dbReference type="PAN-GO" id="Q01085">
    <property type="GO annotations" value="0 GO annotations based on evolutionary models"/>
</dbReference>
<dbReference type="PhylomeDB" id="Q01085"/>
<dbReference type="TreeFam" id="TF312915"/>
<dbReference type="PathwayCommons" id="Q01085"/>
<dbReference type="Reactome" id="R-HSA-6803529">
    <property type="pathway name" value="FGFR2 alternative splicing"/>
</dbReference>
<dbReference type="SignaLink" id="Q01085"/>
<dbReference type="SIGNOR" id="Q01085"/>
<dbReference type="BioGRID-ORCS" id="7073">
    <property type="hits" value="64 hits in 1170 CRISPR screens"/>
</dbReference>
<dbReference type="CD-CODE" id="232F8A39">
    <property type="entry name" value="P-body"/>
</dbReference>
<dbReference type="CD-CODE" id="5C1EA71F">
    <property type="entry name" value="Synthetic Condensate 000098"/>
</dbReference>
<dbReference type="CD-CODE" id="DEE660B4">
    <property type="entry name" value="Stress granule"/>
</dbReference>
<dbReference type="CD-CODE" id="E1879998">
    <property type="entry name" value="Synthetic Condensate 000375"/>
</dbReference>
<dbReference type="ChiTaRS" id="TIAL1">
    <property type="organism name" value="human"/>
</dbReference>
<dbReference type="EvolutionaryTrace" id="Q01085"/>
<dbReference type="GeneWiki" id="TIAL1"/>
<dbReference type="GenomeRNAi" id="7073"/>
<dbReference type="Pharos" id="Q01085">
    <property type="development level" value="Tbio"/>
</dbReference>
<dbReference type="PRO" id="PR:Q01085"/>
<dbReference type="Proteomes" id="UP000005640">
    <property type="component" value="Chromosome 10"/>
</dbReference>
<dbReference type="RNAct" id="Q01085">
    <property type="molecule type" value="protein"/>
</dbReference>
<dbReference type="Bgee" id="ENSG00000151923">
    <property type="expression patterns" value="Expressed in right uterine tube and 208 other cell types or tissues"/>
</dbReference>
<dbReference type="ExpressionAtlas" id="Q01085">
    <property type="expression patterns" value="baseline and differential"/>
</dbReference>
<dbReference type="GO" id="GO:0044194">
    <property type="term" value="C:cytolytic granule"/>
    <property type="evidence" value="ECO:0007669"/>
    <property type="project" value="UniProtKB-SubCell"/>
</dbReference>
<dbReference type="GO" id="GO:0005737">
    <property type="term" value="C:cytoplasm"/>
    <property type="evidence" value="ECO:0000250"/>
    <property type="project" value="UniProtKB"/>
</dbReference>
<dbReference type="GO" id="GO:0010494">
    <property type="term" value="C:cytoplasmic stress granule"/>
    <property type="evidence" value="ECO:0000250"/>
    <property type="project" value="UniProtKB"/>
</dbReference>
<dbReference type="GO" id="GO:0005829">
    <property type="term" value="C:cytosol"/>
    <property type="evidence" value="ECO:0000314"/>
    <property type="project" value="HPA"/>
</dbReference>
<dbReference type="GO" id="GO:0005764">
    <property type="term" value="C:lysosome"/>
    <property type="evidence" value="ECO:0000304"/>
    <property type="project" value="ProtInc"/>
</dbReference>
<dbReference type="GO" id="GO:0005654">
    <property type="term" value="C:nucleoplasm"/>
    <property type="evidence" value="ECO:0000314"/>
    <property type="project" value="HPA"/>
</dbReference>
<dbReference type="GO" id="GO:0005634">
    <property type="term" value="C:nucleus"/>
    <property type="evidence" value="ECO:0000250"/>
    <property type="project" value="UniProtKB"/>
</dbReference>
<dbReference type="GO" id="GO:0003677">
    <property type="term" value="F:DNA binding"/>
    <property type="evidence" value="ECO:0007669"/>
    <property type="project" value="InterPro"/>
</dbReference>
<dbReference type="GO" id="GO:0003730">
    <property type="term" value="F:mRNA 3'-UTR binding"/>
    <property type="evidence" value="ECO:0000314"/>
    <property type="project" value="FlyBase"/>
</dbReference>
<dbReference type="GO" id="GO:0140517">
    <property type="term" value="F:protein-RNA adaptor activity"/>
    <property type="evidence" value="ECO:0000314"/>
    <property type="project" value="FlyBase"/>
</dbReference>
<dbReference type="GO" id="GO:0003723">
    <property type="term" value="F:RNA binding"/>
    <property type="evidence" value="ECO:0007005"/>
    <property type="project" value="UniProtKB"/>
</dbReference>
<dbReference type="GO" id="GO:0006915">
    <property type="term" value="P:apoptotic process"/>
    <property type="evidence" value="ECO:0000304"/>
    <property type="project" value="ProtInc"/>
</dbReference>
<dbReference type="GO" id="GO:0006952">
    <property type="term" value="P:defense response"/>
    <property type="evidence" value="ECO:0000304"/>
    <property type="project" value="ProtInc"/>
</dbReference>
<dbReference type="GO" id="GO:0008285">
    <property type="term" value="P:negative regulation of cell population proliferation"/>
    <property type="evidence" value="ECO:0000315"/>
    <property type="project" value="FlyBase"/>
</dbReference>
<dbReference type="GO" id="GO:0035332">
    <property type="term" value="P:positive regulation of hippo signaling"/>
    <property type="evidence" value="ECO:0000315"/>
    <property type="project" value="FlyBase"/>
</dbReference>
<dbReference type="GO" id="GO:2000637">
    <property type="term" value="P:positive regulation of miRNA-mediated gene silencing"/>
    <property type="evidence" value="ECO:0000316"/>
    <property type="project" value="FlyBase"/>
</dbReference>
<dbReference type="GO" id="GO:0006357">
    <property type="term" value="P:regulation of transcription by RNA polymerase II"/>
    <property type="evidence" value="ECO:0000304"/>
    <property type="project" value="ProtInc"/>
</dbReference>
<dbReference type="CDD" id="cd12616">
    <property type="entry name" value="RRM1_TIAR"/>
    <property type="match status" value="1"/>
</dbReference>
<dbReference type="CDD" id="cd12617">
    <property type="entry name" value="RRM2_TIAR"/>
    <property type="match status" value="1"/>
</dbReference>
<dbReference type="CDD" id="cd12620">
    <property type="entry name" value="RRM3_TIAR"/>
    <property type="match status" value="1"/>
</dbReference>
<dbReference type="FunFam" id="3.30.70.330:FF:000087">
    <property type="entry name" value="Nucleolysin TIAR isoform 1"/>
    <property type="match status" value="1"/>
</dbReference>
<dbReference type="FunFam" id="3.30.70.330:FF:000038">
    <property type="entry name" value="Nucleolysin tiar isoform 1"/>
    <property type="match status" value="1"/>
</dbReference>
<dbReference type="FunFam" id="3.30.70.330:FF:000045">
    <property type="entry name" value="Nucleolysin tiar isoform 1"/>
    <property type="match status" value="1"/>
</dbReference>
<dbReference type="Gene3D" id="3.30.70.330">
    <property type="match status" value="3"/>
</dbReference>
<dbReference type="InterPro" id="IPR012677">
    <property type="entry name" value="Nucleotide-bd_a/b_plait_sf"/>
</dbReference>
<dbReference type="InterPro" id="IPR035979">
    <property type="entry name" value="RBD_domain_sf"/>
</dbReference>
<dbReference type="InterPro" id="IPR000504">
    <property type="entry name" value="RRM_dom"/>
</dbReference>
<dbReference type="InterPro" id="IPR003954">
    <property type="entry name" value="RRM_dom_euk"/>
</dbReference>
<dbReference type="InterPro" id="IPR034492">
    <property type="entry name" value="TIAR_RRM1"/>
</dbReference>
<dbReference type="InterPro" id="IPR034494">
    <property type="entry name" value="TIAR_RRM2"/>
</dbReference>
<dbReference type="InterPro" id="IPR034496">
    <property type="entry name" value="TIAR_RRM3"/>
</dbReference>
<dbReference type="PANTHER" id="PTHR10352">
    <property type="entry name" value="EUKARYOTIC TRANSLATION INITIATION FACTOR 3 SUBUNIT G"/>
    <property type="match status" value="1"/>
</dbReference>
<dbReference type="Pfam" id="PF00076">
    <property type="entry name" value="RRM_1"/>
    <property type="match status" value="3"/>
</dbReference>
<dbReference type="SMART" id="SM00360">
    <property type="entry name" value="RRM"/>
    <property type="match status" value="3"/>
</dbReference>
<dbReference type="SMART" id="SM00361">
    <property type="entry name" value="RRM_1"/>
    <property type="match status" value="3"/>
</dbReference>
<dbReference type="SUPFAM" id="SSF54928">
    <property type="entry name" value="RNA-binding domain, RBD"/>
    <property type="match status" value="3"/>
</dbReference>
<dbReference type="PROSITE" id="PS50102">
    <property type="entry name" value="RRM"/>
    <property type="match status" value="3"/>
</dbReference>
<protein>
    <recommendedName>
        <fullName>Nucleolysin TIAR</fullName>
    </recommendedName>
    <alternativeName>
        <fullName>TIA-1-related protein</fullName>
    </alternativeName>
</protein>
<feature type="chain" id="PRO_0000081978" description="Nucleolysin TIAR">
    <location>
        <begin position="1"/>
        <end position="375"/>
    </location>
</feature>
<feature type="domain" description="RRM 1" evidence="2">
    <location>
        <begin position="9"/>
        <end position="85"/>
    </location>
</feature>
<feature type="domain" description="RRM 2" evidence="2">
    <location>
        <begin position="97"/>
        <end position="175"/>
    </location>
</feature>
<feature type="domain" description="RRM 3" evidence="2">
    <location>
        <begin position="205"/>
        <end position="277"/>
    </location>
</feature>
<feature type="region of interest" description="Disordered" evidence="3">
    <location>
        <begin position="345"/>
        <end position="375"/>
    </location>
</feature>
<feature type="compositionally biased region" description="Pro residues" evidence="3">
    <location>
        <begin position="352"/>
        <end position="363"/>
    </location>
</feature>
<feature type="modified residue" description="N6-acetyllysine" evidence="12">
    <location>
        <position position="122"/>
    </location>
</feature>
<feature type="modified residue" description="Phosphoserine" evidence="13">
    <location>
        <position position="201"/>
    </location>
</feature>
<feature type="splice variant" id="VSP_043700" description="In isoform 2." evidence="11">
    <original>E</original>
    <variation>EQPDSRRVNSSVGFSVLQ</variation>
    <location>
        <position position="43"/>
    </location>
</feature>
<feature type="strand" evidence="15">
    <location>
        <begin position="10"/>
        <end position="15"/>
    </location>
</feature>
<feature type="helix" evidence="15">
    <location>
        <begin position="22"/>
        <end position="32"/>
    </location>
</feature>
<feature type="strand" evidence="15">
    <location>
        <begin position="35"/>
        <end position="41"/>
    </location>
</feature>
<feature type="strand" evidence="15">
    <location>
        <begin position="50"/>
        <end position="57"/>
    </location>
</feature>
<feature type="helix" evidence="15">
    <location>
        <begin position="58"/>
        <end position="68"/>
    </location>
</feature>
<feature type="strand" evidence="15">
    <location>
        <begin position="71"/>
        <end position="73"/>
    </location>
</feature>
<feature type="strand" evidence="15">
    <location>
        <begin position="76"/>
        <end position="82"/>
    </location>
</feature>
<feature type="strand" evidence="16">
    <location>
        <begin position="97"/>
        <end position="102"/>
    </location>
</feature>
<feature type="helix" evidence="16">
    <location>
        <begin position="110"/>
        <end position="116"/>
    </location>
</feature>
<feature type="turn" evidence="16">
    <location>
        <begin position="118"/>
        <end position="120"/>
    </location>
</feature>
<feature type="strand" evidence="16">
    <location>
        <begin position="123"/>
        <end position="130"/>
    </location>
</feature>
<feature type="strand" evidence="16">
    <location>
        <begin position="132"/>
        <end position="134"/>
    </location>
</feature>
<feature type="strand" evidence="16">
    <location>
        <begin position="136"/>
        <end position="147"/>
    </location>
</feature>
<feature type="helix" evidence="16">
    <location>
        <begin position="148"/>
        <end position="157"/>
    </location>
</feature>
<feature type="turn" evidence="16">
    <location>
        <begin position="158"/>
        <end position="160"/>
    </location>
</feature>
<feature type="strand" evidence="16">
    <location>
        <begin position="164"/>
        <end position="166"/>
    </location>
</feature>
<feature type="helix" evidence="14">
    <location>
        <begin position="193"/>
        <end position="199"/>
    </location>
</feature>
<feature type="strand" evidence="14">
    <location>
        <begin position="206"/>
        <end position="210"/>
    </location>
</feature>
<feature type="helix" evidence="14">
    <location>
        <begin position="218"/>
        <end position="228"/>
    </location>
</feature>
<feature type="strand" evidence="14">
    <location>
        <begin position="231"/>
        <end position="237"/>
    </location>
</feature>
<feature type="turn" evidence="14">
    <location>
        <begin position="238"/>
        <end position="241"/>
    </location>
</feature>
<feature type="strand" evidence="14">
    <location>
        <begin position="242"/>
        <end position="249"/>
    </location>
</feature>
<feature type="helix" evidence="14">
    <location>
        <begin position="250"/>
        <end position="260"/>
    </location>
</feature>
<feature type="strand" evidence="14">
    <location>
        <begin position="271"/>
        <end position="273"/>
    </location>
</feature>
<name>TIAR_HUMAN</name>
<keyword id="KW-0002">3D-structure</keyword>
<keyword id="KW-0007">Acetylation</keyword>
<keyword id="KW-0025">Alternative splicing</keyword>
<keyword id="KW-0053">Apoptosis</keyword>
<keyword id="KW-0963">Cytoplasm</keyword>
<keyword id="KW-0458">Lysosome</keyword>
<keyword id="KW-0539">Nucleus</keyword>
<keyword id="KW-0597">Phosphoprotein</keyword>
<keyword id="KW-1267">Proteomics identification</keyword>
<keyword id="KW-1185">Reference proteome</keyword>
<keyword id="KW-0677">Repeat</keyword>
<keyword id="KW-0694">RNA-binding</keyword>
<reference key="1">
    <citation type="journal article" date="1992" name="Proc. Natl. Acad. Sci. U.S.A.">
        <title>Identification and functional characterization of a TIA-1-related nucleolysin.</title>
        <authorList>
            <person name="Kawakami A."/>
            <person name="Tian Q."/>
            <person name="Duan X."/>
            <person name="Streuli M."/>
            <person name="Schlossman S.F."/>
            <person name="Anderson P."/>
        </authorList>
    </citation>
    <scope>NUCLEOTIDE SEQUENCE [MRNA] (ISOFORM 1)</scope>
    <scope>FUNCTION</scope>
    <scope>SUBCELLULAR LOCATION</scope>
</reference>
<reference key="2">
    <citation type="journal article" date="2004" name="Nat. Genet.">
        <title>Complete sequencing and characterization of 21,243 full-length human cDNAs.</title>
        <authorList>
            <person name="Ota T."/>
            <person name="Suzuki Y."/>
            <person name="Nishikawa T."/>
            <person name="Otsuki T."/>
            <person name="Sugiyama T."/>
            <person name="Irie R."/>
            <person name="Wakamatsu A."/>
            <person name="Hayashi K."/>
            <person name="Sato H."/>
            <person name="Nagai K."/>
            <person name="Kimura K."/>
            <person name="Makita H."/>
            <person name="Sekine M."/>
            <person name="Obayashi M."/>
            <person name="Nishi T."/>
            <person name="Shibahara T."/>
            <person name="Tanaka T."/>
            <person name="Ishii S."/>
            <person name="Yamamoto J."/>
            <person name="Saito K."/>
            <person name="Kawai Y."/>
            <person name="Isono Y."/>
            <person name="Nakamura Y."/>
            <person name="Nagahari K."/>
            <person name="Murakami K."/>
            <person name="Yasuda T."/>
            <person name="Iwayanagi T."/>
            <person name="Wagatsuma M."/>
            <person name="Shiratori A."/>
            <person name="Sudo H."/>
            <person name="Hosoiri T."/>
            <person name="Kaku Y."/>
            <person name="Kodaira H."/>
            <person name="Kondo H."/>
            <person name="Sugawara M."/>
            <person name="Takahashi M."/>
            <person name="Kanda K."/>
            <person name="Yokoi T."/>
            <person name="Furuya T."/>
            <person name="Kikkawa E."/>
            <person name="Omura Y."/>
            <person name="Abe K."/>
            <person name="Kamihara K."/>
            <person name="Katsuta N."/>
            <person name="Sato K."/>
            <person name="Tanikawa M."/>
            <person name="Yamazaki M."/>
            <person name="Ninomiya K."/>
            <person name="Ishibashi T."/>
            <person name="Yamashita H."/>
            <person name="Murakawa K."/>
            <person name="Fujimori K."/>
            <person name="Tanai H."/>
            <person name="Kimata M."/>
            <person name="Watanabe M."/>
            <person name="Hiraoka S."/>
            <person name="Chiba Y."/>
            <person name="Ishida S."/>
            <person name="Ono Y."/>
            <person name="Takiguchi S."/>
            <person name="Watanabe S."/>
            <person name="Yosida M."/>
            <person name="Hotuta T."/>
            <person name="Kusano J."/>
            <person name="Kanehori K."/>
            <person name="Takahashi-Fujii A."/>
            <person name="Hara H."/>
            <person name="Tanase T.-O."/>
            <person name="Nomura Y."/>
            <person name="Togiya S."/>
            <person name="Komai F."/>
            <person name="Hara R."/>
            <person name="Takeuchi K."/>
            <person name="Arita M."/>
            <person name="Imose N."/>
            <person name="Musashino K."/>
            <person name="Yuuki H."/>
            <person name="Oshima A."/>
            <person name="Sasaki N."/>
            <person name="Aotsuka S."/>
            <person name="Yoshikawa Y."/>
            <person name="Matsunawa H."/>
            <person name="Ichihara T."/>
            <person name="Shiohata N."/>
            <person name="Sano S."/>
            <person name="Moriya S."/>
            <person name="Momiyama H."/>
            <person name="Satoh N."/>
            <person name="Takami S."/>
            <person name="Terashima Y."/>
            <person name="Suzuki O."/>
            <person name="Nakagawa S."/>
            <person name="Senoh A."/>
            <person name="Mizoguchi H."/>
            <person name="Goto Y."/>
            <person name="Shimizu F."/>
            <person name="Wakebe H."/>
            <person name="Hishigaki H."/>
            <person name="Watanabe T."/>
            <person name="Sugiyama A."/>
            <person name="Takemoto M."/>
            <person name="Kawakami B."/>
            <person name="Yamazaki M."/>
            <person name="Watanabe K."/>
            <person name="Kumagai A."/>
            <person name="Itakura S."/>
            <person name="Fukuzumi Y."/>
            <person name="Fujimori Y."/>
            <person name="Komiyama M."/>
            <person name="Tashiro H."/>
            <person name="Tanigami A."/>
            <person name="Fujiwara T."/>
            <person name="Ono T."/>
            <person name="Yamada K."/>
            <person name="Fujii Y."/>
            <person name="Ozaki K."/>
            <person name="Hirao M."/>
            <person name="Ohmori Y."/>
            <person name="Kawabata A."/>
            <person name="Hikiji T."/>
            <person name="Kobatake N."/>
            <person name="Inagaki H."/>
            <person name="Ikema Y."/>
            <person name="Okamoto S."/>
            <person name="Okitani R."/>
            <person name="Kawakami T."/>
            <person name="Noguchi S."/>
            <person name="Itoh T."/>
            <person name="Shigeta K."/>
            <person name="Senba T."/>
            <person name="Matsumura K."/>
            <person name="Nakajima Y."/>
            <person name="Mizuno T."/>
            <person name="Morinaga M."/>
            <person name="Sasaki M."/>
            <person name="Togashi T."/>
            <person name="Oyama M."/>
            <person name="Hata H."/>
            <person name="Watanabe M."/>
            <person name="Komatsu T."/>
            <person name="Mizushima-Sugano J."/>
            <person name="Satoh T."/>
            <person name="Shirai Y."/>
            <person name="Takahashi Y."/>
            <person name="Nakagawa K."/>
            <person name="Okumura K."/>
            <person name="Nagase T."/>
            <person name="Nomura N."/>
            <person name="Kikuchi H."/>
            <person name="Masuho Y."/>
            <person name="Yamashita R."/>
            <person name="Nakai K."/>
            <person name="Yada T."/>
            <person name="Nakamura Y."/>
            <person name="Ohara O."/>
            <person name="Isogai T."/>
            <person name="Sugano S."/>
        </authorList>
    </citation>
    <scope>NUCLEOTIDE SEQUENCE [LARGE SCALE MRNA] (ISOFORMS 1 AND 2)</scope>
    <source>
        <tissue>Lung</tissue>
    </source>
</reference>
<reference key="3">
    <citation type="journal article" date="1996" name="J. Biol. Chem.">
        <title>Individual RNA recognition motifs of TIA-1 and TIAR have different RNA binding specificities.</title>
        <authorList>
            <person name="Dember L.M."/>
            <person name="Kim N.D."/>
            <person name="Liu K.Q."/>
            <person name="Anderson P."/>
        </authorList>
    </citation>
    <scope>FUNCTION</scope>
    <scope>DOMAIN</scope>
</reference>
<reference key="4">
    <citation type="journal article" date="1999" name="J. Cell Biol.">
        <title>RNA-binding proteins TIA-1 and TIAR link the phosphorylation of eIF-2 alpha to the assembly of mammalian stress granules.</title>
        <authorList>
            <person name="Kedersha N.L."/>
            <person name="Gupta M."/>
            <person name="Li W."/>
            <person name="Miller I."/>
            <person name="Anderson P."/>
        </authorList>
    </citation>
    <scope>FUNCTION</scope>
    <scope>SUBCELLULAR LOCATION</scope>
</reference>
<reference key="5">
    <citation type="journal article" date="2007" name="J. Biol. Chem.">
        <title>Fas-activated serine/threonine kinase (FAST K) synergizes with TIA-1/TIAR proteins to regulate Fas alternative splicing.</title>
        <authorList>
            <person name="Izquierdo J.M."/>
            <person name="Valcarcel J."/>
        </authorList>
    </citation>
    <scope>INTERACTION WITH FASTK</scope>
</reference>
<reference key="6">
    <citation type="journal article" date="2007" name="J. Biol. Chem.">
        <title>Two isoforms of the T-cell intracellular antigen 1 (TIA-1) splicing factor display distinct splicing regulation activities. Control of TIA-1 isoform ratio by TIA-1-related protein.</title>
        <authorList>
            <person name="Izquierdo J.M."/>
            <person name="Valcarcel J."/>
        </authorList>
    </citation>
    <scope>FUNCTION</scope>
    <scope>TISSUE SPECIFICITY</scope>
</reference>
<reference key="7">
    <citation type="journal article" date="2008" name="Mol. Cell">
        <title>Kinase-selective enrichment enables quantitative phosphoproteomics of the kinome across the cell cycle.</title>
        <authorList>
            <person name="Daub H."/>
            <person name="Olsen J.V."/>
            <person name="Bairlein M."/>
            <person name="Gnad F."/>
            <person name="Oppermann F.S."/>
            <person name="Korner R."/>
            <person name="Greff Z."/>
            <person name="Keri G."/>
            <person name="Stemmann O."/>
            <person name="Mann M."/>
        </authorList>
    </citation>
    <scope>IDENTIFICATION BY MASS SPECTROMETRY [LARGE SCALE ANALYSIS]</scope>
    <source>
        <tissue>Cervix carcinoma</tissue>
    </source>
</reference>
<reference key="8">
    <citation type="journal article" date="2009" name="Science">
        <title>Lysine acetylation targets protein complexes and co-regulates major cellular functions.</title>
        <authorList>
            <person name="Choudhary C."/>
            <person name="Kumar C."/>
            <person name="Gnad F."/>
            <person name="Nielsen M.L."/>
            <person name="Rehman M."/>
            <person name="Walther T.C."/>
            <person name="Olsen J.V."/>
            <person name="Mann M."/>
        </authorList>
    </citation>
    <scope>ACETYLATION [LARGE SCALE ANALYSIS] AT LYS-122</scope>
    <scope>IDENTIFICATION BY MASS SPECTROMETRY [LARGE SCALE ANALYSIS]</scope>
</reference>
<reference key="9">
    <citation type="journal article" date="2010" name="Mol. Cell">
        <title>DNA damage activates a spatially distinct late cytoplasmic cell-cycle checkpoint network controlled by MK2-mediated RNA stabilization.</title>
        <authorList>
            <person name="Reinhardt H.C."/>
            <person name="Hasskamp P."/>
            <person name="Schmedding I."/>
            <person name="Morandell S."/>
            <person name="van Vugt M.A."/>
            <person name="Wang X."/>
            <person name="Linding R."/>
            <person name="Ong S.E."/>
            <person name="Weaver D."/>
            <person name="Carr S.A."/>
            <person name="Yaffe M.B."/>
        </authorList>
    </citation>
    <scope>PHOSPHORYLATION BY MAPK14</scope>
</reference>
<reference key="10">
    <citation type="journal article" date="2010" name="Sci. Signal.">
        <title>Quantitative phosphoproteomics reveals widespread full phosphorylation site occupancy during mitosis.</title>
        <authorList>
            <person name="Olsen J.V."/>
            <person name="Vermeulen M."/>
            <person name="Santamaria A."/>
            <person name="Kumar C."/>
            <person name="Miller M.L."/>
            <person name="Jensen L.J."/>
            <person name="Gnad F."/>
            <person name="Cox J."/>
            <person name="Jensen T.S."/>
            <person name="Nigg E.A."/>
            <person name="Brunak S."/>
            <person name="Mann M."/>
        </authorList>
    </citation>
    <scope>PHOSPHORYLATION [LARGE SCALE ANALYSIS] AT SER-201</scope>
    <scope>IDENTIFICATION BY MASS SPECTROMETRY [LARGE SCALE ANALYSIS]</scope>
    <source>
        <tissue>Cervix carcinoma</tissue>
    </source>
</reference>
<reference key="11">
    <citation type="journal article" date="2011" name="BMC Syst. Biol.">
        <title>Initial characterization of the human central proteome.</title>
        <authorList>
            <person name="Burkard T.R."/>
            <person name="Planyavsky M."/>
            <person name="Kaupe I."/>
            <person name="Breitwieser F.P."/>
            <person name="Buerckstuemmer T."/>
            <person name="Bennett K.L."/>
            <person name="Superti-Furga G."/>
            <person name="Colinge J."/>
        </authorList>
    </citation>
    <scope>IDENTIFICATION BY MASS SPECTROMETRY [LARGE SCALE ANALYSIS]</scope>
</reference>
<reference key="12">
    <citation type="submission" date="2005-11" db="PDB data bank">
        <title>Solution structure of the RNA binding domains of nucleolysin TIAR.</title>
        <authorList>
            <consortium name="RIKEN structural genomics initiative (RSGI)"/>
        </authorList>
    </citation>
    <scope>STRUCTURE BY NMR OF 1-282</scope>
</reference>
<evidence type="ECO:0000250" key="1">
    <source>
        <dbReference type="UniProtKB" id="P70318"/>
    </source>
</evidence>
<evidence type="ECO:0000255" key="2">
    <source>
        <dbReference type="PROSITE-ProRule" id="PRU00176"/>
    </source>
</evidence>
<evidence type="ECO:0000256" key="3">
    <source>
        <dbReference type="SAM" id="MobiDB-lite"/>
    </source>
</evidence>
<evidence type="ECO:0000269" key="4">
    <source>
    </source>
</evidence>
<evidence type="ECO:0000269" key="5">
    <source>
    </source>
</evidence>
<evidence type="ECO:0000269" key="6">
    <source>
    </source>
</evidence>
<evidence type="ECO:0000269" key="7">
    <source>
    </source>
</evidence>
<evidence type="ECO:0000269" key="8">
    <source>
    </source>
</evidence>
<evidence type="ECO:0000269" key="9">
    <source>
    </source>
</evidence>
<evidence type="ECO:0000269" key="10">
    <source>
    </source>
</evidence>
<evidence type="ECO:0000303" key="11">
    <source>
    </source>
</evidence>
<evidence type="ECO:0007744" key="12">
    <source>
    </source>
</evidence>
<evidence type="ECO:0007744" key="13">
    <source>
    </source>
</evidence>
<evidence type="ECO:0007829" key="14">
    <source>
        <dbReference type="PDB" id="1X4G"/>
    </source>
</evidence>
<evidence type="ECO:0007829" key="15">
    <source>
        <dbReference type="PDB" id="2CQI"/>
    </source>
</evidence>
<evidence type="ECO:0007829" key="16">
    <source>
        <dbReference type="PDB" id="2DH7"/>
    </source>
</evidence>
<sequence length="375" mass="41591">MMEDDGQPRTLYVGNLSRDVTEVLILQLFSQIGPCKSCKMITEHTSNDPYCFVEFYEHRDAAAALAAMNGRKILGKEVKVNWATTPSSQKKDTSNHFHVFVGDLSPEITTEDIKSAFAPFGKISDARVVKDMATGKSKGYGFVSFYNKLDAENAIVHMGGQWLGGRQIRTNWATRKPPAPKSTQENNTKQLRFEDVVNQSSPKNCTVYCGGIASGLTDQLMRQTFSPFGQIMEIRVFPEKGYSFVRFSTHESAAHAIVSVNGTTIEGHVVKCYWGKESPDMTKNFQQVDYSQWGQWSQVYGNPQQYGQYMANGWQVPPYGVYGQPWNQQGFGVDQSPSAAWMGGFGAQPPQGQAPPPVIPPPNQAGYGMASYQTQ</sequence>
<gene>
    <name type="primary">TIAL1</name>
</gene>
<proteinExistence type="evidence at protein level"/>